<reference key="1">
    <citation type="journal article" date="2000" name="Nature">
        <title>Sequence and analysis of chromosome 1 of the plant Arabidopsis thaliana.</title>
        <authorList>
            <person name="Theologis A."/>
            <person name="Ecker J.R."/>
            <person name="Palm C.J."/>
            <person name="Federspiel N.A."/>
            <person name="Kaul S."/>
            <person name="White O."/>
            <person name="Alonso J."/>
            <person name="Altafi H."/>
            <person name="Araujo R."/>
            <person name="Bowman C.L."/>
            <person name="Brooks S.Y."/>
            <person name="Buehler E."/>
            <person name="Chan A."/>
            <person name="Chao Q."/>
            <person name="Chen H."/>
            <person name="Cheuk R.F."/>
            <person name="Chin C.W."/>
            <person name="Chung M.K."/>
            <person name="Conn L."/>
            <person name="Conway A.B."/>
            <person name="Conway A.R."/>
            <person name="Creasy T.H."/>
            <person name="Dewar K."/>
            <person name="Dunn P."/>
            <person name="Etgu P."/>
            <person name="Feldblyum T.V."/>
            <person name="Feng J.-D."/>
            <person name="Fong B."/>
            <person name="Fujii C.Y."/>
            <person name="Gill J.E."/>
            <person name="Goldsmith A.D."/>
            <person name="Haas B."/>
            <person name="Hansen N.F."/>
            <person name="Hughes B."/>
            <person name="Huizar L."/>
            <person name="Hunter J.L."/>
            <person name="Jenkins J."/>
            <person name="Johnson-Hopson C."/>
            <person name="Khan S."/>
            <person name="Khaykin E."/>
            <person name="Kim C.J."/>
            <person name="Koo H.L."/>
            <person name="Kremenetskaia I."/>
            <person name="Kurtz D.B."/>
            <person name="Kwan A."/>
            <person name="Lam B."/>
            <person name="Langin-Hooper S."/>
            <person name="Lee A."/>
            <person name="Lee J.M."/>
            <person name="Lenz C.A."/>
            <person name="Li J.H."/>
            <person name="Li Y.-P."/>
            <person name="Lin X."/>
            <person name="Liu S.X."/>
            <person name="Liu Z.A."/>
            <person name="Luros J.S."/>
            <person name="Maiti R."/>
            <person name="Marziali A."/>
            <person name="Militscher J."/>
            <person name="Miranda M."/>
            <person name="Nguyen M."/>
            <person name="Nierman W.C."/>
            <person name="Osborne B.I."/>
            <person name="Pai G."/>
            <person name="Peterson J."/>
            <person name="Pham P.K."/>
            <person name="Rizzo M."/>
            <person name="Rooney T."/>
            <person name="Rowley D."/>
            <person name="Sakano H."/>
            <person name="Salzberg S.L."/>
            <person name="Schwartz J.R."/>
            <person name="Shinn P."/>
            <person name="Southwick A.M."/>
            <person name="Sun H."/>
            <person name="Tallon L.J."/>
            <person name="Tambunga G."/>
            <person name="Toriumi M.J."/>
            <person name="Town C.D."/>
            <person name="Utterback T."/>
            <person name="Van Aken S."/>
            <person name="Vaysberg M."/>
            <person name="Vysotskaia V.S."/>
            <person name="Walker M."/>
            <person name="Wu D."/>
            <person name="Yu G."/>
            <person name="Fraser C.M."/>
            <person name="Venter J.C."/>
            <person name="Davis R.W."/>
        </authorList>
    </citation>
    <scope>NUCLEOTIDE SEQUENCE [LARGE SCALE GENOMIC DNA]</scope>
    <source>
        <strain>cv. Columbia</strain>
    </source>
</reference>
<reference key="2">
    <citation type="journal article" date="2017" name="Plant J.">
        <title>Araport11: a complete reannotation of the Arabidopsis thaliana reference genome.</title>
        <authorList>
            <person name="Cheng C.Y."/>
            <person name="Krishnakumar V."/>
            <person name="Chan A.P."/>
            <person name="Thibaud-Nissen F."/>
            <person name="Schobel S."/>
            <person name="Town C.D."/>
        </authorList>
    </citation>
    <scope>GENOME REANNOTATION</scope>
    <source>
        <strain>cv. Columbia</strain>
    </source>
</reference>
<reference key="3">
    <citation type="journal article" date="2002" name="Science">
        <title>Functional annotation of a full-length Arabidopsis cDNA collection.</title>
        <authorList>
            <person name="Seki M."/>
            <person name="Narusaka M."/>
            <person name="Kamiya A."/>
            <person name="Ishida J."/>
            <person name="Satou M."/>
            <person name="Sakurai T."/>
            <person name="Nakajima M."/>
            <person name="Enju A."/>
            <person name="Akiyama K."/>
            <person name="Oono Y."/>
            <person name="Muramatsu M."/>
            <person name="Hayashizaki Y."/>
            <person name="Kawai J."/>
            <person name="Carninci P."/>
            <person name="Itoh M."/>
            <person name="Ishii Y."/>
            <person name="Arakawa T."/>
            <person name="Shibata K."/>
            <person name="Shinagawa A."/>
            <person name="Shinozaki K."/>
        </authorList>
    </citation>
    <scope>NUCLEOTIDE SEQUENCE [LARGE SCALE MRNA]</scope>
    <source>
        <strain>cv. Columbia</strain>
    </source>
</reference>
<reference key="4">
    <citation type="journal article" date="2003" name="Science">
        <title>Empirical analysis of transcriptional activity in the Arabidopsis genome.</title>
        <authorList>
            <person name="Yamada K."/>
            <person name="Lim J."/>
            <person name="Dale J.M."/>
            <person name="Chen H."/>
            <person name="Shinn P."/>
            <person name="Palm C.J."/>
            <person name="Southwick A.M."/>
            <person name="Wu H.C."/>
            <person name="Kim C.J."/>
            <person name="Nguyen M."/>
            <person name="Pham P.K."/>
            <person name="Cheuk R.F."/>
            <person name="Karlin-Newmann G."/>
            <person name="Liu S.X."/>
            <person name="Lam B."/>
            <person name="Sakano H."/>
            <person name="Wu T."/>
            <person name="Yu G."/>
            <person name="Miranda M."/>
            <person name="Quach H.L."/>
            <person name="Tripp M."/>
            <person name="Chang C.H."/>
            <person name="Lee J.M."/>
            <person name="Toriumi M.J."/>
            <person name="Chan M.M."/>
            <person name="Tang C.C."/>
            <person name="Onodera C.S."/>
            <person name="Deng J.M."/>
            <person name="Akiyama K."/>
            <person name="Ansari Y."/>
            <person name="Arakawa T."/>
            <person name="Banh J."/>
            <person name="Banno F."/>
            <person name="Bowser L."/>
            <person name="Brooks S.Y."/>
            <person name="Carninci P."/>
            <person name="Chao Q."/>
            <person name="Choy N."/>
            <person name="Enju A."/>
            <person name="Goldsmith A.D."/>
            <person name="Gurjal M."/>
            <person name="Hansen N.F."/>
            <person name="Hayashizaki Y."/>
            <person name="Johnson-Hopson C."/>
            <person name="Hsuan V.W."/>
            <person name="Iida K."/>
            <person name="Karnes M."/>
            <person name="Khan S."/>
            <person name="Koesema E."/>
            <person name="Ishida J."/>
            <person name="Jiang P.X."/>
            <person name="Jones T."/>
            <person name="Kawai J."/>
            <person name="Kamiya A."/>
            <person name="Meyers C."/>
            <person name="Nakajima M."/>
            <person name="Narusaka M."/>
            <person name="Seki M."/>
            <person name="Sakurai T."/>
            <person name="Satou M."/>
            <person name="Tamse R."/>
            <person name="Vaysberg M."/>
            <person name="Wallender E.K."/>
            <person name="Wong C."/>
            <person name="Yamamura Y."/>
            <person name="Yuan S."/>
            <person name="Shinozaki K."/>
            <person name="Davis R.W."/>
            <person name="Theologis A."/>
            <person name="Ecker J.R."/>
        </authorList>
    </citation>
    <scope>NUCLEOTIDE SEQUENCE [LARGE SCALE MRNA]</scope>
    <source>
        <strain>cv. Columbia</strain>
    </source>
</reference>
<reference key="5">
    <citation type="submission" date="2002-03" db="EMBL/GenBank/DDBJ databases">
        <title>Full-length cDNA from Arabidopsis thaliana.</title>
        <authorList>
            <person name="Brover V.V."/>
            <person name="Troukhan M.E."/>
            <person name="Alexandrov N.A."/>
            <person name="Lu Y.-P."/>
            <person name="Flavell R.B."/>
            <person name="Feldmann K.A."/>
        </authorList>
    </citation>
    <scope>NUCLEOTIDE SEQUENCE [LARGE SCALE MRNA]</scope>
</reference>
<reference key="6">
    <citation type="journal article" date="2003" name="Plant Physiol.">
        <title>Arabidopsis genes encoding mitochondrial type II NAD(P)H dehydrogenases have different evolutionary origin and show distinct responses to light.</title>
        <authorList>
            <person name="Michalecka A.M."/>
            <person name="Svensson A.S."/>
            <person name="Johansson F.I."/>
            <person name="Agius S.C."/>
            <person name="Johanson U."/>
            <person name="Brennicke A."/>
            <person name="Binder S."/>
            <person name="Rasmusson A.G."/>
        </authorList>
    </citation>
    <scope>SUBCELLULAR LOCATION</scope>
    <scope>INDUCTION BY LIGHT</scope>
    <scope>TISSUE SPECIFICITY</scope>
</reference>
<reference key="7">
    <citation type="journal article" date="2003" name="Plant Physiol.">
        <title>Identification of AtNDI1, an internal non-phosphorylating NAD(P)H dehydrogenase in Arabidopsis mitochondria.</title>
        <authorList>
            <person name="Moore C.S."/>
            <person name="Cook-Johnson R.J."/>
            <person name="Rudhe C."/>
            <person name="Whelan J."/>
            <person name="Day D.A."/>
            <person name="Wiskich J.T."/>
            <person name="Soole K.L."/>
        </authorList>
    </citation>
    <scope>DISRUPTION PHENOTYPE</scope>
    <scope>SUBCELLULAR LOCATION</scope>
</reference>
<reference key="8">
    <citation type="journal article" date="2004" name="Annu. Rev. Plant Biol.">
        <title>Alternative NAD(P)H dehydrogenases of plant mitochondria.</title>
        <authorList>
            <person name="Rasmusson A.G."/>
            <person name="Soole K.L."/>
            <person name="Elthon T.E."/>
        </authorList>
    </citation>
    <scope>REVIEW</scope>
</reference>
<reference key="9">
    <citation type="journal article" date="2004" name="Plant Physiol.">
        <title>Light regulation of the Arabidopsis respiratory chain. Multiple discrete photoreceptor responses contribute to induction of type II NAD(P)H dehydrogenase genes.</title>
        <authorList>
            <person name="Escobar M.A."/>
            <person name="Franklin K.A."/>
            <person name="Svensson A.S."/>
            <person name="Salter M.G."/>
            <person name="Whitelam G.C."/>
            <person name="Rasmusson A.G."/>
        </authorList>
    </citation>
    <scope>INDUCTION BY LIGHT</scope>
</reference>
<reference key="10">
    <citation type="journal article" date="2006" name="Plant Cell Physiol.">
        <title>Characterization of mitochondrial alternative NAD(P)H dehydrogenases in Arabidopsis: intraorganelle location and expression.</title>
        <authorList>
            <person name="Elhafez D."/>
            <person name="Murcha M.W."/>
            <person name="Clifton R."/>
            <person name="Soole K.L."/>
            <person name="Day D.A."/>
            <person name="Whelan J."/>
        </authorList>
    </citation>
    <scope>SUBCELLULAR LOCATION</scope>
    <scope>TISSUE SPECIFICITY</scope>
    <scope>INDUCTION BY LIGHT</scope>
    <source>
        <strain>cv. Columbia</strain>
    </source>
</reference>
<reference key="11">
    <citation type="journal article" date="2008" name="FEBS Lett.">
        <title>Type II NAD(P)H dehydrogenases are targeted to mitochondria and chloroplasts or peroxisomes in Arabidopsis thaliana.</title>
        <authorList>
            <person name="Carrie C."/>
            <person name="Murcha M.W."/>
            <person name="Kuehn K."/>
            <person name="Duncan O."/>
            <person name="Barthet M."/>
            <person name="Smith P.M."/>
            <person name="Eubel H."/>
            <person name="Meyer E."/>
            <person name="Day D.A."/>
            <person name="Millar A.H."/>
            <person name="Whelan J."/>
        </authorList>
    </citation>
    <scope>SUBCELLULAR LOCATION</scope>
    <scope>MICROBODY TARGETING SIGNAL</scope>
</reference>
<gene>
    <name type="primary">NDA1</name>
    <name type="synonym">NDI1</name>
    <name type="ordered locus">At1g07180</name>
    <name type="ORF">F10K1.11</name>
</gene>
<organism>
    <name type="scientific">Arabidopsis thaliana</name>
    <name type="common">Mouse-ear cress</name>
    <dbReference type="NCBI Taxonomy" id="3702"/>
    <lineage>
        <taxon>Eukaryota</taxon>
        <taxon>Viridiplantae</taxon>
        <taxon>Streptophyta</taxon>
        <taxon>Embryophyta</taxon>
        <taxon>Tracheophyta</taxon>
        <taxon>Spermatophyta</taxon>
        <taxon>Magnoliopsida</taxon>
        <taxon>eudicotyledons</taxon>
        <taxon>Gunneridae</taxon>
        <taxon>Pentapetalae</taxon>
        <taxon>rosids</taxon>
        <taxon>malvids</taxon>
        <taxon>Brassicales</taxon>
        <taxon>Brassicaceae</taxon>
        <taxon>Camelineae</taxon>
        <taxon>Arabidopsis</taxon>
    </lineage>
</organism>
<protein>
    <recommendedName>
        <fullName>Internal alternative NAD(P)H-ubiquinone oxidoreductase A1, mitochondrial</fullName>
        <ecNumber>1.6.5.9</ecNumber>
    </recommendedName>
    <alternativeName>
        <fullName>Internal alternative NADH dehydrogenase NDA1</fullName>
    </alternativeName>
    <alternativeName>
        <fullName>Internal non-phosphorylating NAD(P)H dehydrogenase 1</fullName>
        <shortName>AtNDI1</shortName>
    </alternativeName>
    <alternativeName>
        <fullName>NADH:ubiquinone reductase (non-electrogenic) NDA1</fullName>
    </alternativeName>
</protein>
<evidence type="ECO:0000250" key="1"/>
<evidence type="ECO:0000255" key="2"/>
<evidence type="ECO:0000269" key="3">
    <source>
    </source>
</evidence>
<evidence type="ECO:0000269" key="4">
    <source>
    </source>
</evidence>
<evidence type="ECO:0000269" key="5">
    <source>
    </source>
</evidence>
<evidence type="ECO:0000269" key="6">
    <source>
    </source>
</evidence>
<evidence type="ECO:0000305" key="7"/>
<keyword id="KW-0274">FAD</keyword>
<keyword id="KW-0285">Flavoprotein</keyword>
<keyword id="KW-0472">Membrane</keyword>
<keyword id="KW-0496">Mitochondrion</keyword>
<keyword id="KW-0999">Mitochondrion inner membrane</keyword>
<keyword id="KW-0520">NAD</keyword>
<keyword id="KW-0521">NADP</keyword>
<keyword id="KW-0560">Oxidoreductase</keyword>
<keyword id="KW-0576">Peroxisome</keyword>
<keyword id="KW-1185">Reference proteome</keyword>
<keyword id="KW-0809">Transit peptide</keyword>
<dbReference type="EC" id="1.6.5.9"/>
<dbReference type="EMBL" id="AC067971">
    <property type="protein sequence ID" value="AAF82202.1"/>
    <property type="status" value="ALT_SEQ"/>
    <property type="molecule type" value="Genomic_DNA"/>
</dbReference>
<dbReference type="EMBL" id="CP002684">
    <property type="protein sequence ID" value="AEE28089.1"/>
    <property type="molecule type" value="Genomic_DNA"/>
</dbReference>
<dbReference type="EMBL" id="AK118982">
    <property type="protein sequence ID" value="BAC43558.1"/>
    <property type="molecule type" value="mRNA"/>
</dbReference>
<dbReference type="EMBL" id="BT005564">
    <property type="protein sequence ID" value="AAO63984.1"/>
    <property type="molecule type" value="mRNA"/>
</dbReference>
<dbReference type="EMBL" id="AY084663">
    <property type="protein sequence ID" value="AAM61225.1"/>
    <property type="molecule type" value="mRNA"/>
</dbReference>
<dbReference type="PIR" id="H86206">
    <property type="entry name" value="H86206"/>
</dbReference>
<dbReference type="RefSeq" id="NP_563783.1">
    <property type="nucleotide sequence ID" value="NM_100592.5"/>
</dbReference>
<dbReference type="SMR" id="Q8GWA1"/>
<dbReference type="FunCoup" id="Q8GWA1">
    <property type="interactions" value="190"/>
</dbReference>
<dbReference type="STRING" id="3702.Q8GWA1"/>
<dbReference type="GlyGen" id="Q8GWA1">
    <property type="glycosylation" value="1 site"/>
</dbReference>
<dbReference type="iPTMnet" id="Q8GWA1"/>
<dbReference type="PaxDb" id="3702-AT1G07180.1"/>
<dbReference type="ProteomicsDB" id="236814"/>
<dbReference type="EnsemblPlants" id="AT1G07180.1">
    <property type="protein sequence ID" value="AT1G07180.1"/>
    <property type="gene ID" value="AT1G07180"/>
</dbReference>
<dbReference type="GeneID" id="837229"/>
<dbReference type="Gramene" id="AT1G07180.1">
    <property type="protein sequence ID" value="AT1G07180.1"/>
    <property type="gene ID" value="AT1G07180"/>
</dbReference>
<dbReference type="KEGG" id="ath:AT1G07180"/>
<dbReference type="Araport" id="AT1G07180"/>
<dbReference type="TAIR" id="AT1G07180">
    <property type="gene designation" value="NDA1"/>
</dbReference>
<dbReference type="eggNOG" id="KOG2495">
    <property type="taxonomic scope" value="Eukaryota"/>
</dbReference>
<dbReference type="HOGENOM" id="CLU_021377_1_3_1"/>
<dbReference type="InParanoid" id="Q8GWA1"/>
<dbReference type="OMA" id="KWILVEA"/>
<dbReference type="PhylomeDB" id="Q8GWA1"/>
<dbReference type="BioCyc" id="ARA:AT1G07180-MONOMER"/>
<dbReference type="PRO" id="PR:Q8GWA1"/>
<dbReference type="Proteomes" id="UP000006548">
    <property type="component" value="Chromosome 1"/>
</dbReference>
<dbReference type="ExpressionAtlas" id="Q8GWA1">
    <property type="expression patterns" value="baseline and differential"/>
</dbReference>
<dbReference type="GO" id="GO:0005743">
    <property type="term" value="C:mitochondrial inner membrane"/>
    <property type="evidence" value="ECO:0007669"/>
    <property type="project" value="UniProtKB-SubCell"/>
</dbReference>
<dbReference type="GO" id="GO:0005759">
    <property type="term" value="C:mitochondrial matrix"/>
    <property type="evidence" value="ECO:0000250"/>
    <property type="project" value="UniProtKB"/>
</dbReference>
<dbReference type="GO" id="GO:0005739">
    <property type="term" value="C:mitochondrion"/>
    <property type="evidence" value="ECO:0000314"/>
    <property type="project" value="UniProtKB"/>
</dbReference>
<dbReference type="GO" id="GO:0005777">
    <property type="term" value="C:peroxisome"/>
    <property type="evidence" value="ECO:0000314"/>
    <property type="project" value="UniProtKB"/>
</dbReference>
<dbReference type="GO" id="GO:0003954">
    <property type="term" value="F:NADH dehydrogenase activity"/>
    <property type="evidence" value="ECO:0000315"/>
    <property type="project" value="TAIR"/>
</dbReference>
<dbReference type="GO" id="GO:0050136">
    <property type="term" value="F:NADH:ubiquinone reductase (non-electrogenic) activity"/>
    <property type="evidence" value="ECO:0007669"/>
    <property type="project" value="UniProtKB-EC"/>
</dbReference>
<dbReference type="GO" id="GO:0003959">
    <property type="term" value="F:NADPH dehydrogenase activity"/>
    <property type="evidence" value="ECO:0000250"/>
    <property type="project" value="UniProtKB"/>
</dbReference>
<dbReference type="GO" id="GO:0016491">
    <property type="term" value="F:oxidoreductase activity"/>
    <property type="evidence" value="ECO:0000250"/>
    <property type="project" value="UniProtKB"/>
</dbReference>
<dbReference type="GO" id="GO:0071482">
    <property type="term" value="P:cellular response to light stimulus"/>
    <property type="evidence" value="ECO:0000270"/>
    <property type="project" value="UniProtKB"/>
</dbReference>
<dbReference type="FunFam" id="3.50.50.100:FF:000009">
    <property type="entry name" value="Internal alternative NAD(P)H-ubiquinone oxidoreductase A1, mitochondrial"/>
    <property type="match status" value="1"/>
</dbReference>
<dbReference type="Gene3D" id="3.50.50.100">
    <property type="match status" value="1"/>
</dbReference>
<dbReference type="InterPro" id="IPR036188">
    <property type="entry name" value="FAD/NAD-bd_sf"/>
</dbReference>
<dbReference type="InterPro" id="IPR023753">
    <property type="entry name" value="FAD/NAD-binding_dom"/>
</dbReference>
<dbReference type="InterPro" id="IPR045024">
    <property type="entry name" value="NDH-2"/>
</dbReference>
<dbReference type="InterPro" id="IPR054585">
    <property type="entry name" value="NDH2-like_C"/>
</dbReference>
<dbReference type="PANTHER" id="PTHR43706:SF21">
    <property type="entry name" value="INTERNAL ALTERNATIVE NAD(P)H-UBIQUINONE OXIDOREDUCTASE A1, MITOCHONDRIAL"/>
    <property type="match status" value="1"/>
</dbReference>
<dbReference type="PANTHER" id="PTHR43706">
    <property type="entry name" value="NADH DEHYDROGENASE"/>
    <property type="match status" value="1"/>
</dbReference>
<dbReference type="Pfam" id="PF22366">
    <property type="entry name" value="NDH2_C"/>
    <property type="match status" value="1"/>
</dbReference>
<dbReference type="Pfam" id="PF07992">
    <property type="entry name" value="Pyr_redox_2"/>
    <property type="match status" value="1"/>
</dbReference>
<dbReference type="PRINTS" id="PR00368">
    <property type="entry name" value="FADPNR"/>
</dbReference>
<dbReference type="SUPFAM" id="SSF51905">
    <property type="entry name" value="FAD/NAD(P)-binding domain"/>
    <property type="match status" value="2"/>
</dbReference>
<proteinExistence type="evidence at transcript level"/>
<sequence length="510" mass="56628">MLWIKNLARISQTTSSSVGNVFRNPESYTLSSRFCTALQKQQVTDTVQAKEDVVNALEPQRYDGLAPTKEGEKPRVLVLGSGWAGCRVLKGIDTSIYDVVCVSPRNHMVFTPLLASTCVGTLEFRSVAEPISRIQPAISREPGSYYFLANCSKLDADNHEVHCETVTEGSSTLKPWKFKIAYDKLVLACGAEASTFGINGVLENAIFLREVHHAQEIRRKLLLNLMLSEVPGIGEDEKKRLLHCVVVGGGPTGVEFSGELSDFIMKDVRQRYSHVKDDIRVTLIEARDILSSFDDRLRHYAIKQLNKSGVKLVRGIVKEVKPQKLILDDGTEVPYGPLVWSTGVGPSSFVRSLDFPKDPGGRIGIDEWMRVPSVQDVFAIGDCSGYLESTGKSTLPALAQVAEREGKYLANLFNVMGKAGGGRANSAKEMELGEPFVYKHLGSMATIGRYKALVDLRESKEGKGISMAGFLSWFIWRSAYLTRVVSWRNRFYVAINWLTTFVFGRDISRI</sequence>
<name>NDA1_ARATH</name>
<accession>Q8GWA1</accession>
<accession>Q8L5V3</accession>
<accession>Q9LML0</accession>
<comment type="function">
    <text evidence="1">Alternative NADH-ubiquinone oxidoreductase which catalyzes the oxidation of mitochondrial NADH does not translocate protons across the inner mitochondrial membrane.</text>
</comment>
<comment type="catalytic activity">
    <reaction>
        <text>a quinone + NADH + H(+) = a quinol + NAD(+)</text>
        <dbReference type="Rhea" id="RHEA:46160"/>
        <dbReference type="ChEBI" id="CHEBI:15378"/>
        <dbReference type="ChEBI" id="CHEBI:24646"/>
        <dbReference type="ChEBI" id="CHEBI:57540"/>
        <dbReference type="ChEBI" id="CHEBI:57945"/>
        <dbReference type="ChEBI" id="CHEBI:132124"/>
        <dbReference type="EC" id="1.6.5.9"/>
    </reaction>
</comment>
<comment type="catalytic activity">
    <reaction>
        <text>a ubiquinone + NADH + H(+) = a ubiquinol + NAD(+)</text>
        <dbReference type="Rhea" id="RHEA:23152"/>
        <dbReference type="Rhea" id="RHEA-COMP:9565"/>
        <dbReference type="Rhea" id="RHEA-COMP:9566"/>
        <dbReference type="ChEBI" id="CHEBI:15378"/>
        <dbReference type="ChEBI" id="CHEBI:16389"/>
        <dbReference type="ChEBI" id="CHEBI:17976"/>
        <dbReference type="ChEBI" id="CHEBI:57540"/>
        <dbReference type="ChEBI" id="CHEBI:57945"/>
    </reaction>
</comment>
<comment type="cofactor">
    <cofactor evidence="1">
        <name>FAD</name>
        <dbReference type="ChEBI" id="CHEBI:57692"/>
    </cofactor>
    <text evidence="1">Binds 1 FAD per subunit.</text>
</comment>
<comment type="subcellular location">
    <subcellularLocation>
        <location>Mitochondrion inner membrane</location>
        <topology>Peripheral membrane protein</topology>
        <orientation>Matrix side</orientation>
    </subcellularLocation>
    <subcellularLocation>
        <location>Peroxisome</location>
    </subcellularLocation>
</comment>
<comment type="tissue specificity">
    <text evidence="3 6">Expressed in seedlings, cotyledons, young leaves, stems and flowers and, to a lower extent, in roots and buds.</text>
</comment>
<comment type="induction">
    <text evidence="3 5 6">Follows a circadian regulation; up-regulated in a diurnal manner. Up-regulated by high-light.</text>
</comment>
<comment type="disruption phenotype">
    <text evidence="4">No visible phenotype.</text>
</comment>
<comment type="similarity">
    <text evidence="7">Belongs to the NADH dehydrogenase family.</text>
</comment>
<comment type="sequence caution" evidence="7">
    <conflict type="erroneous gene model prediction">
        <sequence resource="EMBL-CDS" id="AAF82202"/>
    </conflict>
</comment>
<feature type="transit peptide" description="Mitochondrion" evidence="2">
    <location>
        <begin position="1"/>
        <end position="48"/>
    </location>
</feature>
<feature type="chain" id="PRO_0000419503" description="Internal alternative NAD(P)H-ubiquinone oxidoreductase A1, mitochondrial">
    <location>
        <begin position="49"/>
        <end position="510"/>
    </location>
</feature>
<feature type="short sequence motif" description="Microbody targeting signal">
    <location>
        <begin position="501"/>
        <end position="510"/>
    </location>
</feature>
<feature type="binding site" evidence="1">
    <location>
        <begin position="75"/>
        <end position="105"/>
    </location>
    <ligand>
        <name>FAD</name>
        <dbReference type="ChEBI" id="CHEBI:57692"/>
    </ligand>
</feature>
<feature type="binding site" evidence="1">
    <location>
        <begin position="242"/>
        <end position="278"/>
    </location>
    <ligand>
        <name>NAD(+)</name>
        <dbReference type="ChEBI" id="CHEBI:57540"/>
    </ligand>
</feature>
<feature type="sequence conflict" description="In Ref. 5; AAM61225." evidence="7" ref="5">
    <original>P</original>
    <variation>L</variation>
    <location>
        <position position="337"/>
    </location>
</feature>
<feature type="sequence conflict" description="In Ref. 5; AAM61225." evidence="7" ref="5">
    <original>A</original>
    <variation>T</variation>
    <location>
        <position position="410"/>
    </location>
</feature>